<keyword id="KW-0030">Aminoacyl-tRNA synthetase</keyword>
<keyword id="KW-0067">ATP-binding</keyword>
<keyword id="KW-0963">Cytoplasm</keyword>
<keyword id="KW-0436">Ligase</keyword>
<keyword id="KW-0479">Metal-binding</keyword>
<keyword id="KW-0547">Nucleotide-binding</keyword>
<keyword id="KW-0648">Protein biosynthesis</keyword>
<keyword id="KW-0694">RNA-binding</keyword>
<keyword id="KW-0820">tRNA-binding</keyword>
<keyword id="KW-0862">Zinc</keyword>
<comment type="function">
    <text evidence="1">Is required not only for elongation of protein synthesis but also for the initiation of all mRNA translation through initiator tRNA(fMet) aminoacylation.</text>
</comment>
<comment type="catalytic activity">
    <reaction evidence="1">
        <text>tRNA(Met) + L-methionine + ATP = L-methionyl-tRNA(Met) + AMP + diphosphate</text>
        <dbReference type="Rhea" id="RHEA:13481"/>
        <dbReference type="Rhea" id="RHEA-COMP:9667"/>
        <dbReference type="Rhea" id="RHEA-COMP:9698"/>
        <dbReference type="ChEBI" id="CHEBI:30616"/>
        <dbReference type="ChEBI" id="CHEBI:33019"/>
        <dbReference type="ChEBI" id="CHEBI:57844"/>
        <dbReference type="ChEBI" id="CHEBI:78442"/>
        <dbReference type="ChEBI" id="CHEBI:78530"/>
        <dbReference type="ChEBI" id="CHEBI:456215"/>
        <dbReference type="EC" id="6.1.1.10"/>
    </reaction>
</comment>
<comment type="cofactor">
    <cofactor evidence="1">
        <name>Zn(2+)</name>
        <dbReference type="ChEBI" id="CHEBI:29105"/>
    </cofactor>
    <text evidence="1">Binds 1 zinc ion per subunit.</text>
</comment>
<comment type="subunit">
    <text evidence="1">Homodimer.</text>
</comment>
<comment type="subcellular location">
    <subcellularLocation>
        <location evidence="1">Cytoplasm</location>
    </subcellularLocation>
</comment>
<comment type="similarity">
    <text evidence="1">Belongs to the class-I aminoacyl-tRNA synthetase family. MetG type 1 subfamily.</text>
</comment>
<reference key="1">
    <citation type="journal article" date="2009" name="J. Bacteriol.">
        <title>The genome of Burkholderia cenocepacia J2315, an epidemic pathogen of cystic fibrosis patients.</title>
        <authorList>
            <person name="Holden M.T."/>
            <person name="Seth-Smith H.M."/>
            <person name="Crossman L.C."/>
            <person name="Sebaihia M."/>
            <person name="Bentley S.D."/>
            <person name="Cerdeno-Tarraga A.M."/>
            <person name="Thomson N.R."/>
            <person name="Bason N."/>
            <person name="Quail M.A."/>
            <person name="Sharp S."/>
            <person name="Cherevach I."/>
            <person name="Churcher C."/>
            <person name="Goodhead I."/>
            <person name="Hauser H."/>
            <person name="Holroyd N."/>
            <person name="Mungall K."/>
            <person name="Scott P."/>
            <person name="Walker D."/>
            <person name="White B."/>
            <person name="Rose H."/>
            <person name="Iversen P."/>
            <person name="Mil-Homens D."/>
            <person name="Rocha E.P."/>
            <person name="Fialho A.M."/>
            <person name="Baldwin A."/>
            <person name="Dowson C."/>
            <person name="Barrell B.G."/>
            <person name="Govan J.R."/>
            <person name="Vandamme P."/>
            <person name="Hart C.A."/>
            <person name="Mahenthiralingam E."/>
            <person name="Parkhill J."/>
        </authorList>
    </citation>
    <scope>NUCLEOTIDE SEQUENCE [LARGE SCALE GENOMIC DNA]</scope>
    <source>
        <strain>ATCC BAA-245 / DSM 16553 / LMG 16656 / NCTC 13227 / J2315 / CF5610</strain>
    </source>
</reference>
<protein>
    <recommendedName>
        <fullName evidence="1">Methionine--tRNA ligase</fullName>
        <ecNumber evidence="1">6.1.1.10</ecNumber>
    </recommendedName>
    <alternativeName>
        <fullName evidence="1">Methionyl-tRNA synthetase</fullName>
        <shortName evidence="1">MetRS</shortName>
    </alternativeName>
</protein>
<gene>
    <name evidence="1" type="primary">metG</name>
    <name type="ordered locus">BceJ2315_25860</name>
    <name type="ORF">BCAL2646</name>
</gene>
<organism>
    <name type="scientific">Burkholderia cenocepacia (strain ATCC BAA-245 / DSM 16553 / LMG 16656 / NCTC 13227 / J2315 / CF5610)</name>
    <name type="common">Burkholderia cepacia (strain J2315)</name>
    <dbReference type="NCBI Taxonomy" id="216591"/>
    <lineage>
        <taxon>Bacteria</taxon>
        <taxon>Pseudomonadati</taxon>
        <taxon>Pseudomonadota</taxon>
        <taxon>Betaproteobacteria</taxon>
        <taxon>Burkholderiales</taxon>
        <taxon>Burkholderiaceae</taxon>
        <taxon>Burkholderia</taxon>
        <taxon>Burkholderia cepacia complex</taxon>
    </lineage>
</organism>
<evidence type="ECO:0000255" key="1">
    <source>
        <dbReference type="HAMAP-Rule" id="MF_00098"/>
    </source>
</evidence>
<feature type="chain" id="PRO_1000093702" description="Methionine--tRNA ligase">
    <location>
        <begin position="1"/>
        <end position="718"/>
    </location>
</feature>
<feature type="domain" description="tRNA-binding" evidence="1">
    <location>
        <begin position="612"/>
        <end position="718"/>
    </location>
</feature>
<feature type="short sequence motif" description="'HIGH' region">
    <location>
        <begin position="27"/>
        <end position="37"/>
    </location>
</feature>
<feature type="short sequence motif" description="'KMSKS' region">
    <location>
        <begin position="348"/>
        <end position="352"/>
    </location>
</feature>
<feature type="binding site" evidence="1">
    <location>
        <position position="158"/>
    </location>
    <ligand>
        <name>Zn(2+)</name>
        <dbReference type="ChEBI" id="CHEBI:29105"/>
    </ligand>
</feature>
<feature type="binding site" evidence="1">
    <location>
        <position position="161"/>
    </location>
    <ligand>
        <name>Zn(2+)</name>
        <dbReference type="ChEBI" id="CHEBI:29105"/>
    </ligand>
</feature>
<feature type="binding site" evidence="1">
    <location>
        <position position="171"/>
    </location>
    <ligand>
        <name>Zn(2+)</name>
        <dbReference type="ChEBI" id="CHEBI:29105"/>
    </ligand>
</feature>
<feature type="binding site" evidence="1">
    <location>
        <position position="174"/>
    </location>
    <ligand>
        <name>Zn(2+)</name>
        <dbReference type="ChEBI" id="CHEBI:29105"/>
    </ligand>
</feature>
<feature type="binding site" evidence="1">
    <location>
        <position position="351"/>
    </location>
    <ligand>
        <name>ATP</name>
        <dbReference type="ChEBI" id="CHEBI:30616"/>
    </ligand>
</feature>
<accession>B4E8E0</accession>
<name>SYM_BURCJ</name>
<sequence length="718" mass="79193">MSASDLTSVQAAAPQGSRQILVTSALPYANGQIHIGHLVEYIQTDIWVRALRMHGHEVYYIGADDTHGTPIMLRAEKEGLTPKQLIDRVWTEHKRDFDSFGVSFDNFYSTDSDENRVLSEKIYLALQEAGLIAEREIEQAYDPVKEMFLPDRFIKGECPKCHAKDQYGDNCEVCGSTYLPTELLNPYSVVSGATPVRKTSKHYFFRLSDPRCESFLREWVSGLAQPEATNKMREWLGDAGEAKLADWDISRDAPYFGFEIPGAPGKYFYVWLDAPVGYYASFKNLCERNGIDFDAWIRPGSKAEQYHFIGKDILYFHTLFWPAMLEFSGHRTPTNVFAHGFLTVDGAKMSKSRGTFITAQSYIDTGLNPEWLRYYFAAKLNATMEDIDLNLDDFQARVNSDLVGKYVNIASRAAGFLIKRFDGRVQDSAMNHPLVAKLRDAIPQIAASYEAREYGRALRHTMELADEVNAYVDGAKPWDLAKDPANAVALHETCSVSLEAFRLLSLALKPVMPRVAAAVEAFFGIAPLAWADAAKPLSSAQPIKAYQHLMTRVDAKQIEALLAANRDSLQADAAGAAAGGANAAKDAKSNAKANAKPAVVNGADDAPISIDDFAKIDLRIAKIVACQAVEGSDKLLQLTLDVGEEKTRNVFSGIKSAYQPEQLVGKLTVMVANLAPRKMKFGLSEGMVLAASATDEKAEPGLYILEPHSGAKPGMRVK</sequence>
<proteinExistence type="inferred from homology"/>
<dbReference type="EC" id="6.1.1.10" evidence="1"/>
<dbReference type="EMBL" id="AM747720">
    <property type="protein sequence ID" value="CAR52948.1"/>
    <property type="molecule type" value="Genomic_DNA"/>
</dbReference>
<dbReference type="RefSeq" id="WP_006493649.1">
    <property type="nucleotide sequence ID" value="NC_011000.1"/>
</dbReference>
<dbReference type="SMR" id="B4E8E0"/>
<dbReference type="GeneID" id="56559023"/>
<dbReference type="KEGG" id="bcj:BCAL2646"/>
<dbReference type="eggNOG" id="COG0073">
    <property type="taxonomic scope" value="Bacteria"/>
</dbReference>
<dbReference type="eggNOG" id="COG0143">
    <property type="taxonomic scope" value="Bacteria"/>
</dbReference>
<dbReference type="HOGENOM" id="CLU_009710_7_0_4"/>
<dbReference type="BioCyc" id="BCEN216591:G1G1V-2934-MONOMER"/>
<dbReference type="Proteomes" id="UP000001035">
    <property type="component" value="Chromosome 1"/>
</dbReference>
<dbReference type="GO" id="GO:0005829">
    <property type="term" value="C:cytosol"/>
    <property type="evidence" value="ECO:0007669"/>
    <property type="project" value="TreeGrafter"/>
</dbReference>
<dbReference type="GO" id="GO:0005524">
    <property type="term" value="F:ATP binding"/>
    <property type="evidence" value="ECO:0007669"/>
    <property type="project" value="UniProtKB-UniRule"/>
</dbReference>
<dbReference type="GO" id="GO:0046872">
    <property type="term" value="F:metal ion binding"/>
    <property type="evidence" value="ECO:0007669"/>
    <property type="project" value="UniProtKB-KW"/>
</dbReference>
<dbReference type="GO" id="GO:0004825">
    <property type="term" value="F:methionine-tRNA ligase activity"/>
    <property type="evidence" value="ECO:0007669"/>
    <property type="project" value="UniProtKB-UniRule"/>
</dbReference>
<dbReference type="GO" id="GO:0000049">
    <property type="term" value="F:tRNA binding"/>
    <property type="evidence" value="ECO:0007669"/>
    <property type="project" value="UniProtKB-KW"/>
</dbReference>
<dbReference type="GO" id="GO:0006431">
    <property type="term" value="P:methionyl-tRNA aminoacylation"/>
    <property type="evidence" value="ECO:0007669"/>
    <property type="project" value="UniProtKB-UniRule"/>
</dbReference>
<dbReference type="CDD" id="cd07957">
    <property type="entry name" value="Anticodon_Ia_Met"/>
    <property type="match status" value="1"/>
</dbReference>
<dbReference type="CDD" id="cd00814">
    <property type="entry name" value="MetRS_core"/>
    <property type="match status" value="1"/>
</dbReference>
<dbReference type="CDD" id="cd02800">
    <property type="entry name" value="tRNA_bind_EcMetRS_like"/>
    <property type="match status" value="1"/>
</dbReference>
<dbReference type="FunFam" id="2.20.28.20:FF:000001">
    <property type="entry name" value="Methionine--tRNA ligase"/>
    <property type="match status" value="1"/>
</dbReference>
<dbReference type="FunFam" id="2.40.50.140:FF:000042">
    <property type="entry name" value="Methionine--tRNA ligase"/>
    <property type="match status" value="1"/>
</dbReference>
<dbReference type="Gene3D" id="3.40.50.620">
    <property type="entry name" value="HUPs"/>
    <property type="match status" value="1"/>
</dbReference>
<dbReference type="Gene3D" id="1.10.730.10">
    <property type="entry name" value="Isoleucyl-tRNA Synthetase, Domain 1"/>
    <property type="match status" value="1"/>
</dbReference>
<dbReference type="Gene3D" id="2.20.28.20">
    <property type="entry name" value="Methionyl-tRNA synthetase, Zn-domain"/>
    <property type="match status" value="1"/>
</dbReference>
<dbReference type="Gene3D" id="2.40.50.140">
    <property type="entry name" value="Nucleic acid-binding proteins"/>
    <property type="match status" value="1"/>
</dbReference>
<dbReference type="HAMAP" id="MF_00098">
    <property type="entry name" value="Met_tRNA_synth_type1"/>
    <property type="match status" value="1"/>
</dbReference>
<dbReference type="InterPro" id="IPR001412">
    <property type="entry name" value="aa-tRNA-synth_I_CS"/>
</dbReference>
<dbReference type="InterPro" id="IPR041872">
    <property type="entry name" value="Anticodon_Met"/>
</dbReference>
<dbReference type="InterPro" id="IPR004495">
    <property type="entry name" value="Met-tRNA-synth_bsu_C"/>
</dbReference>
<dbReference type="InterPro" id="IPR023458">
    <property type="entry name" value="Met-tRNA_ligase_1"/>
</dbReference>
<dbReference type="InterPro" id="IPR014758">
    <property type="entry name" value="Met-tRNA_synth"/>
</dbReference>
<dbReference type="InterPro" id="IPR015413">
    <property type="entry name" value="Methionyl/Leucyl_tRNA_Synth"/>
</dbReference>
<dbReference type="InterPro" id="IPR033911">
    <property type="entry name" value="MetRS_core"/>
</dbReference>
<dbReference type="InterPro" id="IPR029038">
    <property type="entry name" value="MetRS_Zn"/>
</dbReference>
<dbReference type="InterPro" id="IPR012340">
    <property type="entry name" value="NA-bd_OB-fold"/>
</dbReference>
<dbReference type="InterPro" id="IPR014729">
    <property type="entry name" value="Rossmann-like_a/b/a_fold"/>
</dbReference>
<dbReference type="InterPro" id="IPR002547">
    <property type="entry name" value="tRNA-bd_dom"/>
</dbReference>
<dbReference type="InterPro" id="IPR009080">
    <property type="entry name" value="tRNAsynth_Ia_anticodon-bd"/>
</dbReference>
<dbReference type="NCBIfam" id="TIGR00398">
    <property type="entry name" value="metG"/>
    <property type="match status" value="1"/>
</dbReference>
<dbReference type="NCBIfam" id="TIGR00399">
    <property type="entry name" value="metG_C_term"/>
    <property type="match status" value="1"/>
</dbReference>
<dbReference type="NCBIfam" id="NF001100">
    <property type="entry name" value="PRK00133.1"/>
    <property type="match status" value="1"/>
</dbReference>
<dbReference type="PANTHER" id="PTHR45765">
    <property type="entry name" value="METHIONINE--TRNA LIGASE"/>
    <property type="match status" value="1"/>
</dbReference>
<dbReference type="PANTHER" id="PTHR45765:SF1">
    <property type="entry name" value="METHIONINE--TRNA LIGASE, CYTOPLASMIC"/>
    <property type="match status" value="1"/>
</dbReference>
<dbReference type="Pfam" id="PF09334">
    <property type="entry name" value="tRNA-synt_1g"/>
    <property type="match status" value="1"/>
</dbReference>
<dbReference type="Pfam" id="PF01588">
    <property type="entry name" value="tRNA_bind"/>
    <property type="match status" value="1"/>
</dbReference>
<dbReference type="PRINTS" id="PR01041">
    <property type="entry name" value="TRNASYNTHMET"/>
</dbReference>
<dbReference type="SUPFAM" id="SSF47323">
    <property type="entry name" value="Anticodon-binding domain of a subclass of class I aminoacyl-tRNA synthetases"/>
    <property type="match status" value="1"/>
</dbReference>
<dbReference type="SUPFAM" id="SSF57770">
    <property type="entry name" value="Methionyl-tRNA synthetase (MetRS), Zn-domain"/>
    <property type="match status" value="1"/>
</dbReference>
<dbReference type="SUPFAM" id="SSF50249">
    <property type="entry name" value="Nucleic acid-binding proteins"/>
    <property type="match status" value="1"/>
</dbReference>
<dbReference type="SUPFAM" id="SSF52374">
    <property type="entry name" value="Nucleotidylyl transferase"/>
    <property type="match status" value="1"/>
</dbReference>
<dbReference type="PROSITE" id="PS00178">
    <property type="entry name" value="AA_TRNA_LIGASE_I"/>
    <property type="match status" value="1"/>
</dbReference>
<dbReference type="PROSITE" id="PS50886">
    <property type="entry name" value="TRBD"/>
    <property type="match status" value="1"/>
</dbReference>